<name>NCAP_IBVG</name>
<organism>
    <name type="scientific">Avian infectious bronchitis virus (strain Gray)</name>
    <name type="common">IBV</name>
    <dbReference type="NCBI Taxonomy" id="31624"/>
    <lineage>
        <taxon>Viruses</taxon>
        <taxon>Riboviria</taxon>
        <taxon>Orthornavirae</taxon>
        <taxon>Pisuviricota</taxon>
        <taxon>Pisoniviricetes</taxon>
        <taxon>Nidovirales</taxon>
        <taxon>Cornidovirineae</taxon>
        <taxon>Coronaviridae</taxon>
        <taxon>Orthocoronavirinae</taxon>
        <taxon>Gammacoronavirus</taxon>
        <taxon>Igacovirus</taxon>
        <taxon>Avian coronavirus</taxon>
    </lineage>
</organism>
<proteinExistence type="evidence at protein level"/>
<accession>P32923</accession>
<keyword id="KW-0002">3D-structure</keyword>
<keyword id="KW-0013">ADP-ribosylation</keyword>
<keyword id="KW-1015">Disulfide bond</keyword>
<keyword id="KW-1040">Host Golgi apparatus</keyword>
<keyword id="KW-0597">Phosphoprotein</keyword>
<keyword id="KW-0687">Ribonucleoprotein</keyword>
<keyword id="KW-0694">RNA-binding</keyword>
<keyword id="KW-0804">Transcription</keyword>
<keyword id="KW-0805">Transcription regulation</keyword>
<keyword id="KW-0543">Viral nucleoprotein</keyword>
<keyword id="KW-0946">Virion</keyword>
<comment type="function">
    <text evidence="1">Packages the positive strand viral genome RNA into a helical ribonucleocapsid (RNP) and plays a fundamental role during virion assembly through its interactions with the viral genome and membrane protein M. Plays an important role in enhancing the efficiency of subgenomic viral RNA transcription as well as viral replication.</text>
</comment>
<comment type="subunit">
    <text evidence="1">Homooligomer. Both monomeric and oligomeric forms interact with RNA. Interacts with protein M. Interacts with NSP3; this interaction serves to tether the genome to the newly translated replicase-transcriptase complex at a very early stage of infection.</text>
</comment>
<comment type="interaction">
    <interactant intactId="EBI-25638681">
        <id>P32923</id>
    </interactant>
    <interactant intactId="EBI-25638681">
        <id>P32923</id>
        <label>N</label>
    </interactant>
    <organismsDiffer>false</organismsDiffer>
    <experiments>2</experiments>
</comment>
<comment type="subcellular location">
    <subcellularLocation>
        <location evidence="1">Virion</location>
    </subcellularLocation>
    <subcellularLocation>
        <location evidence="1">Host endoplasmic reticulum-Golgi intermediate compartment</location>
    </subcellularLocation>
    <subcellularLocation>
        <location evidence="1">Host Golgi apparatus</location>
    </subcellularLocation>
    <text evidence="1">Located inside the virion, complexed with the viral RNA. Probably associates with ER-derived membranes where it participates in viral RNA synthesis and virus budding.</text>
</comment>
<comment type="PTM">
    <text evidence="1">ADP-ribosylated. The ADP-ribosylation is retained in the virion during infection.</text>
</comment>
<comment type="PTM">
    <text evidence="1">Phosphorylated on serine and threonine residues.</text>
</comment>
<comment type="similarity">
    <text evidence="1">Belongs to the gammacoronavirus nucleocapsid protein family.</text>
</comment>
<dbReference type="EMBL" id="S55229">
    <property type="status" value="NOT_ANNOTATED_CDS"/>
    <property type="molecule type" value="mRNA"/>
</dbReference>
<dbReference type="EMBL" id="S48137">
    <property type="protein sequence ID" value="AAB24054.1"/>
    <property type="molecule type" value="Genomic_RNA"/>
</dbReference>
<dbReference type="EMBL" id="M85245">
    <property type="protein sequence ID" value="AAA91856.1"/>
    <property type="molecule type" value="Genomic_RNA"/>
</dbReference>
<dbReference type="PIR" id="A43574">
    <property type="entry name" value="VHIHG1"/>
</dbReference>
<dbReference type="PIR" id="A48559">
    <property type="entry name" value="A48559"/>
</dbReference>
<dbReference type="PDB" id="2GE7">
    <property type="method" value="X-ray"/>
    <property type="resolution" value="2.00 A"/>
    <property type="chains" value="A/B=226-333"/>
</dbReference>
<dbReference type="PDB" id="2GE8">
    <property type="method" value="X-ray"/>
    <property type="resolution" value="2.20 A"/>
    <property type="chains" value="A/B/C/D/F/G/I/J=220-333"/>
</dbReference>
<dbReference type="PDB" id="2GEC">
    <property type="method" value="X-ray"/>
    <property type="resolution" value="1.30 A"/>
    <property type="chains" value="A/B=22-160"/>
</dbReference>
<dbReference type="PDBsum" id="2GE7"/>
<dbReference type="PDBsum" id="2GE8"/>
<dbReference type="PDBsum" id="2GEC"/>
<dbReference type="SMR" id="P32923"/>
<dbReference type="EvolutionaryTrace" id="P32923"/>
<dbReference type="GO" id="GO:0044172">
    <property type="term" value="C:host cell endoplasmic reticulum-Golgi intermediate compartment"/>
    <property type="evidence" value="ECO:0007669"/>
    <property type="project" value="UniProtKB-SubCell"/>
</dbReference>
<dbReference type="GO" id="GO:0044177">
    <property type="term" value="C:host cell Golgi apparatus"/>
    <property type="evidence" value="ECO:0007669"/>
    <property type="project" value="UniProtKB-SubCell"/>
</dbReference>
<dbReference type="GO" id="GO:1990904">
    <property type="term" value="C:ribonucleoprotein complex"/>
    <property type="evidence" value="ECO:0007669"/>
    <property type="project" value="UniProtKB-KW"/>
</dbReference>
<dbReference type="GO" id="GO:0019013">
    <property type="term" value="C:viral nucleocapsid"/>
    <property type="evidence" value="ECO:0007669"/>
    <property type="project" value="UniProtKB-UniRule"/>
</dbReference>
<dbReference type="GO" id="GO:0042802">
    <property type="term" value="F:identical protein binding"/>
    <property type="evidence" value="ECO:0000353"/>
    <property type="project" value="IntAct"/>
</dbReference>
<dbReference type="GO" id="GO:0003723">
    <property type="term" value="F:RNA binding"/>
    <property type="evidence" value="ECO:0007669"/>
    <property type="project" value="UniProtKB-UniRule"/>
</dbReference>
<dbReference type="CDD" id="cd21595">
    <property type="entry name" value="CoV_N-CTD"/>
    <property type="match status" value="1"/>
</dbReference>
<dbReference type="CDD" id="cd21554">
    <property type="entry name" value="CoV_N-NTD"/>
    <property type="match status" value="1"/>
</dbReference>
<dbReference type="HAMAP" id="MF_04097">
    <property type="entry name" value="GAMMA_CORONA_NCAP"/>
    <property type="match status" value="1"/>
</dbReference>
<dbReference type="InterPro" id="IPR044344">
    <property type="entry name" value="N_prot_C_CoV"/>
</dbReference>
<dbReference type="InterPro" id="IPR044345">
    <property type="entry name" value="N_prot_N_CoV"/>
</dbReference>
<dbReference type="InterPro" id="IPR042547">
    <property type="entry name" value="NCAP_gCoV"/>
</dbReference>
<dbReference type="InterPro" id="IPR001218">
    <property type="entry name" value="Nucleocap_CoV"/>
</dbReference>
<dbReference type="InterPro" id="IPR037179">
    <property type="entry name" value="Nucleocapsid_C"/>
</dbReference>
<dbReference type="InterPro" id="IPR037195">
    <property type="entry name" value="Nucleocapsid_N"/>
</dbReference>
<dbReference type="Pfam" id="PF00937">
    <property type="entry name" value="CoV_nucleocap"/>
    <property type="match status" value="1"/>
</dbReference>
<dbReference type="PIRSF" id="PIRSF003888">
    <property type="entry name" value="Corona_nucleocap"/>
    <property type="match status" value="1"/>
</dbReference>
<dbReference type="SUPFAM" id="SSF110304">
    <property type="entry name" value="Coronavirus RNA-binding domain"/>
    <property type="match status" value="1"/>
</dbReference>
<dbReference type="SUPFAM" id="SSF103068">
    <property type="entry name" value="Nucleocapsid protein dimerization domain"/>
    <property type="match status" value="1"/>
</dbReference>
<dbReference type="PROSITE" id="PS51929">
    <property type="entry name" value="COV_N_CTD"/>
    <property type="match status" value="1"/>
</dbReference>
<dbReference type="PROSITE" id="PS51928">
    <property type="entry name" value="COV_N_NTD"/>
    <property type="match status" value="1"/>
</dbReference>
<sequence length="409" mass="45249">MASGKATGKTDAPAPVIKLGGPRPPKVGSSGNASWFQAIKAKKLNSPQPKFEGSGVPDNENFKTSQQHGYWRRQARFKPGKGRRKPVPDAWYFYYTGTGPAADLNWGDSQDGIVWVAAKGADVKSRSNQGTRDPDKFDQYPLRFSDGGPDGNFRWDFIPLNRGRSGRSTAASSAASSRPPSREGSRGRRSGSEDDLIARAAKIIQDQQKKGSRITKAKADEMAHRRYCKRTIPPGYKVDQVFGPRTKGKEGNFGDDKMNEEGIKDGRVTAMLNLVPSSHACLFGSRVTPKLQPDGLHLKFEFTTVVPRDDPQFDNYVKICDQCVDGVGTRPKDDEPKPKSRSSSRPATRTSSPAPRQQRLKKEKRPKKQDDEVDKALTSDEERNNAQLEFDDEPKVINWGDSALGENEL</sequence>
<evidence type="ECO:0000255" key="1">
    <source>
        <dbReference type="HAMAP-Rule" id="MF_04097"/>
    </source>
</evidence>
<evidence type="ECO:0000255" key="2">
    <source>
        <dbReference type="PROSITE-ProRule" id="PRU01276"/>
    </source>
</evidence>
<evidence type="ECO:0000255" key="3">
    <source>
        <dbReference type="PROSITE-ProRule" id="PRU01277"/>
    </source>
</evidence>
<evidence type="ECO:0000256" key="4">
    <source>
        <dbReference type="SAM" id="MobiDB-lite"/>
    </source>
</evidence>
<evidence type="ECO:0007829" key="5">
    <source>
        <dbReference type="PDB" id="2GE7"/>
    </source>
</evidence>
<evidence type="ECO:0007829" key="6">
    <source>
        <dbReference type="PDB" id="2GEC"/>
    </source>
</evidence>
<organismHost>
    <name type="scientific">Gallus gallus</name>
    <name type="common">Chicken</name>
    <dbReference type="NCBI Taxonomy" id="9031"/>
</organismHost>
<protein>
    <recommendedName>
        <fullName evidence="1">Nucleoprotein</fullName>
    </recommendedName>
    <alternativeName>
        <fullName evidence="1">Nucleocapsid protein</fullName>
        <shortName evidence="1">NC</shortName>
        <shortName evidence="1">Protein N</shortName>
    </alternativeName>
</protein>
<reference key="1">
    <citation type="journal article" date="1990" name="Adv. Exp. Med. Biol.">
        <title>Sequence comparisons of the 3' end of the genomes of five strains of avian infectious bronchitis virus.</title>
        <authorList>
            <person name="Collisson E.W."/>
            <person name="Williams A.K."/>
            <person name="Vonder Haar R."/>
            <person name="Li W."/>
            <person name="Sneed L.W."/>
        </authorList>
    </citation>
    <scope>NUCLEOTIDE SEQUENCE [MRNA]</scope>
</reference>
<reference key="2">
    <citation type="journal article" date="1992" name="Virus Res.">
        <title>Comparative analyses of the nucleocapsid genes of several strains of infectious bronchitis virus and other coronaviruses.</title>
        <authorList>
            <person name="Williams A.K."/>
            <person name="Wang L."/>
            <person name="Sneed L.W."/>
            <person name="Collisson E.W."/>
        </authorList>
    </citation>
    <scope>NUCLEOTIDE SEQUENCE [GENOMIC RNA]</scope>
</reference>
<reference key="3">
    <citation type="submission" date="1996-03" db="EMBL/GenBank/DDBJ databases">
        <title>Nucleocapsid gene sequence analysis of several strains of infectious bronchitis virus describing the evolutionary relationship of IBV within the coronaviridae family.</title>
        <authorList>
            <person name="Williams A.K."/>
            <person name="Wang L."/>
            <person name="Sneed L.W."/>
            <person name="Collisson E.W."/>
        </authorList>
    </citation>
    <scope>NUCLEOTIDE SEQUENCE [GENOMIC RNA]</scope>
</reference>
<reference key="4">
    <citation type="journal article" date="2006" name="J. Virol.">
        <title>X-ray structures of the N- and C-terminal domains of a coronavirus nucleocapsid protein: implications for nucleocapsid formation.</title>
        <authorList>
            <person name="Jayaram H."/>
            <person name="Fan H."/>
            <person name="Bowman B.R."/>
            <person name="Ooi A."/>
            <person name="Jayaram J."/>
            <person name="Collisson E.W."/>
            <person name="Lescar J."/>
            <person name="Prasad B.V.V."/>
        </authorList>
    </citation>
    <scope>X-RAY CRYSTALLOGRAPHY (1.3 ANGSTROMS) OF 22-160</scope>
    <scope>X-RAY CRYSTALLOGRAPHY (2.0 ANGSTROMS) OF 226-333</scope>
    <scope>RNA-BINDING</scope>
    <scope>DIMERIZATION DOMAIN</scope>
</reference>
<gene>
    <name evidence="1" type="primary">N</name>
    <name type="ORF">6</name>
</gene>
<feature type="chain" id="PRO_0000105981" description="Nucleoprotein">
    <location>
        <begin position="1"/>
        <end position="409"/>
    </location>
</feature>
<feature type="domain" description="CoV N NTD" evidence="2">
    <location>
        <begin position="31"/>
        <end position="156"/>
    </location>
</feature>
<feature type="domain" description="CoV N CTD" evidence="3">
    <location>
        <begin position="215"/>
        <end position="331"/>
    </location>
</feature>
<feature type="region of interest" description="Disordered" evidence="4">
    <location>
        <begin position="1"/>
        <end position="32"/>
    </location>
</feature>
<feature type="region of interest" description="RNA-binding" evidence="1">
    <location>
        <begin position="29"/>
        <end position="160"/>
    </location>
</feature>
<feature type="region of interest" description="Disordered" evidence="4">
    <location>
        <begin position="46"/>
        <end position="84"/>
    </location>
</feature>
<feature type="region of interest" description="Disordered" evidence="4">
    <location>
        <begin position="121"/>
        <end position="194"/>
    </location>
</feature>
<feature type="region of interest" description="Dimerization" evidence="1">
    <location>
        <begin position="226"/>
        <end position="333"/>
    </location>
</feature>
<feature type="region of interest" description="Disordered" evidence="4">
    <location>
        <begin position="238"/>
        <end position="259"/>
    </location>
</feature>
<feature type="region of interest" description="Disordered" evidence="4">
    <location>
        <begin position="326"/>
        <end position="409"/>
    </location>
</feature>
<feature type="compositionally biased region" description="Basic residues" evidence="4">
    <location>
        <begin position="70"/>
        <end position="84"/>
    </location>
</feature>
<feature type="compositionally biased region" description="Low complexity" evidence="4">
    <location>
        <begin position="162"/>
        <end position="179"/>
    </location>
</feature>
<feature type="compositionally biased region" description="Basic and acidic residues" evidence="4">
    <location>
        <begin position="180"/>
        <end position="192"/>
    </location>
</feature>
<feature type="compositionally biased region" description="Basic and acidic residues" evidence="4">
    <location>
        <begin position="247"/>
        <end position="259"/>
    </location>
</feature>
<feature type="compositionally biased region" description="Low complexity" evidence="4">
    <location>
        <begin position="341"/>
        <end position="356"/>
    </location>
</feature>
<feature type="compositionally biased region" description="Basic residues" evidence="4">
    <location>
        <begin position="358"/>
        <end position="367"/>
    </location>
</feature>
<feature type="compositionally biased region" description="Basic and acidic residues" evidence="4">
    <location>
        <begin position="368"/>
        <end position="384"/>
    </location>
</feature>
<feature type="modified residue" description="Phosphoserine; by host" evidence="1">
    <location>
        <position position="190"/>
    </location>
</feature>
<feature type="modified residue" description="Phosphoserine; by host" evidence="1">
    <location>
        <position position="192"/>
    </location>
</feature>
<feature type="modified residue" description="Phosphothreonine; by host" evidence="1">
    <location>
        <position position="378"/>
    </location>
</feature>
<feature type="modified residue" description="Phosphoserine; by host" evidence="1">
    <location>
        <position position="379"/>
    </location>
</feature>
<feature type="disulfide bond" evidence="1">
    <location>
        <begin position="320"/>
        <end position="323"/>
    </location>
</feature>
<feature type="sequence conflict" description="In Ref. 1." ref="1">
    <original>AHRRYCKRTIPPGYKVDQVFG</original>
    <variation>VIAGIASALFHLVIRLIKFLV</variation>
    <location>
        <begin position="223"/>
        <end position="243"/>
    </location>
</feature>
<feature type="sequence conflict" description="In Ref. 1." ref="1">
    <original>R</original>
    <variation>G</variation>
    <location>
        <position position="245"/>
    </location>
</feature>
<feature type="strand" evidence="6">
    <location>
        <begin position="39"/>
        <end position="43"/>
    </location>
</feature>
<feature type="strand" evidence="6">
    <location>
        <begin position="51"/>
        <end position="53"/>
    </location>
</feature>
<feature type="helix" evidence="6">
    <location>
        <begin position="64"/>
        <end position="66"/>
    </location>
</feature>
<feature type="strand" evidence="6">
    <location>
        <begin position="68"/>
        <end position="78"/>
    </location>
</feature>
<feature type="strand" evidence="6">
    <location>
        <begin position="81"/>
        <end position="83"/>
    </location>
</feature>
<feature type="strand" evidence="6">
    <location>
        <begin position="85"/>
        <end position="95"/>
    </location>
</feature>
<feature type="turn" evidence="6">
    <location>
        <begin position="100"/>
        <end position="103"/>
    </location>
</feature>
<feature type="strand" evidence="6">
    <location>
        <begin position="113"/>
        <end position="117"/>
    </location>
</feature>
<feature type="turn" evidence="6">
    <location>
        <begin position="134"/>
        <end position="136"/>
    </location>
</feature>
<feature type="helix" evidence="5">
    <location>
        <begin position="227"/>
        <end position="229"/>
    </location>
</feature>
<feature type="helix" evidence="5">
    <location>
        <begin position="239"/>
        <end position="242"/>
    </location>
</feature>
<feature type="strand" evidence="5">
    <location>
        <begin position="247"/>
        <end position="249"/>
    </location>
</feature>
<feature type="helix" evidence="5">
    <location>
        <begin position="256"/>
        <end position="261"/>
    </location>
</feature>
<feature type="helix" evidence="5">
    <location>
        <begin position="262"/>
        <end position="264"/>
    </location>
</feature>
<feature type="helix" evidence="5">
    <location>
        <begin position="266"/>
        <end position="272"/>
    </location>
</feature>
<feature type="helix" evidence="5">
    <location>
        <begin position="278"/>
        <end position="284"/>
    </location>
</feature>
<feature type="strand" evidence="5">
    <location>
        <begin position="285"/>
        <end position="292"/>
    </location>
</feature>
<feature type="strand" evidence="5">
    <location>
        <begin position="295"/>
        <end position="307"/>
    </location>
</feature>
<feature type="helix" evidence="5">
    <location>
        <begin position="313"/>
        <end position="323"/>
    </location>
</feature>